<gene>
    <name evidence="1" type="primary">rpl18e</name>
    <name type="ordered locus">AF_1127</name>
</gene>
<accession>O29138</accession>
<reference key="1">
    <citation type="journal article" date="1997" name="Nature">
        <title>The complete genome sequence of the hyperthermophilic, sulphate-reducing archaeon Archaeoglobus fulgidus.</title>
        <authorList>
            <person name="Klenk H.-P."/>
            <person name="Clayton R.A."/>
            <person name="Tomb J.-F."/>
            <person name="White O."/>
            <person name="Nelson K.E."/>
            <person name="Ketchum K.A."/>
            <person name="Dodson R.J."/>
            <person name="Gwinn M.L."/>
            <person name="Hickey E.K."/>
            <person name="Peterson J.D."/>
            <person name="Richardson D.L."/>
            <person name="Kerlavage A.R."/>
            <person name="Graham D.E."/>
            <person name="Kyrpides N.C."/>
            <person name="Fleischmann R.D."/>
            <person name="Quackenbush J."/>
            <person name="Lee N.H."/>
            <person name="Sutton G.G."/>
            <person name="Gill S.R."/>
            <person name="Kirkness E.F."/>
            <person name="Dougherty B.A."/>
            <person name="McKenney K."/>
            <person name="Adams M.D."/>
            <person name="Loftus B.J."/>
            <person name="Peterson S.N."/>
            <person name="Reich C.I."/>
            <person name="McNeil L.K."/>
            <person name="Badger J.H."/>
            <person name="Glodek A."/>
            <person name="Zhou L."/>
            <person name="Overbeek R."/>
            <person name="Gocayne J.D."/>
            <person name="Weidman J.F."/>
            <person name="McDonald L.A."/>
            <person name="Utterback T.R."/>
            <person name="Cotton M.D."/>
            <person name="Spriggs T."/>
            <person name="Artiach P."/>
            <person name="Kaine B.P."/>
            <person name="Sykes S.M."/>
            <person name="Sadow P.W."/>
            <person name="D'Andrea K.P."/>
            <person name="Bowman C."/>
            <person name="Fujii C."/>
            <person name="Garland S.A."/>
            <person name="Mason T.M."/>
            <person name="Olsen G.J."/>
            <person name="Fraser C.M."/>
            <person name="Smith H.O."/>
            <person name="Woese C.R."/>
            <person name="Venter J.C."/>
        </authorList>
    </citation>
    <scope>NUCLEOTIDE SEQUENCE [LARGE SCALE GENOMIC DNA]</scope>
    <source>
        <strain>ATCC 49558 / DSM 4304 / JCM 9628 / NBRC 100126 / VC-16</strain>
    </source>
</reference>
<sequence length="117" mass="12743">MRKSNPNLVTLIDVLLSESAKNEAPVWKEVAERLAKPRRLQAEVNVSKIEKYAKPNEYVVVPGKVLGSGSITKPVKVAALSFSEKAASKIREAGGVCMKIEELLKENPKGSGVRLMV</sequence>
<evidence type="ECO:0000255" key="1">
    <source>
        <dbReference type="HAMAP-Rule" id="MF_00329"/>
    </source>
</evidence>
<evidence type="ECO:0000305" key="2"/>
<keyword id="KW-1185">Reference proteome</keyword>
<keyword id="KW-0687">Ribonucleoprotein</keyword>
<keyword id="KW-0689">Ribosomal protein</keyword>
<feature type="chain" id="PRO_0000132786" description="Large ribosomal subunit protein eL18">
    <location>
        <begin position="1"/>
        <end position="117"/>
    </location>
</feature>
<organism>
    <name type="scientific">Archaeoglobus fulgidus (strain ATCC 49558 / DSM 4304 / JCM 9628 / NBRC 100126 / VC-16)</name>
    <dbReference type="NCBI Taxonomy" id="224325"/>
    <lineage>
        <taxon>Archaea</taxon>
        <taxon>Methanobacteriati</taxon>
        <taxon>Methanobacteriota</taxon>
        <taxon>Archaeoglobi</taxon>
        <taxon>Archaeoglobales</taxon>
        <taxon>Archaeoglobaceae</taxon>
        <taxon>Archaeoglobus</taxon>
    </lineage>
</organism>
<proteinExistence type="inferred from homology"/>
<dbReference type="EMBL" id="AE000782">
    <property type="protein sequence ID" value="AAB90121.1"/>
    <property type="status" value="ALT_SEQ"/>
    <property type="molecule type" value="Genomic_DNA"/>
</dbReference>
<dbReference type="PIR" id="F69390">
    <property type="entry name" value="F69390"/>
</dbReference>
<dbReference type="SMR" id="O29138"/>
<dbReference type="STRING" id="224325.AF_1127"/>
<dbReference type="PaxDb" id="224325-AF_1127"/>
<dbReference type="EnsemblBacteria" id="AAB90121">
    <property type="protein sequence ID" value="AAB90121"/>
    <property type="gene ID" value="AF_1127"/>
</dbReference>
<dbReference type="KEGG" id="afu:AF_1127"/>
<dbReference type="eggNOG" id="arCOG00780">
    <property type="taxonomic scope" value="Archaea"/>
</dbReference>
<dbReference type="HOGENOM" id="CLU_146465_0_0_2"/>
<dbReference type="PhylomeDB" id="O29138"/>
<dbReference type="Proteomes" id="UP000002199">
    <property type="component" value="Chromosome"/>
</dbReference>
<dbReference type="GO" id="GO:0022625">
    <property type="term" value="C:cytosolic large ribosomal subunit"/>
    <property type="evidence" value="ECO:0007669"/>
    <property type="project" value="TreeGrafter"/>
</dbReference>
<dbReference type="GO" id="GO:0003723">
    <property type="term" value="F:RNA binding"/>
    <property type="evidence" value="ECO:0007669"/>
    <property type="project" value="TreeGrafter"/>
</dbReference>
<dbReference type="GO" id="GO:0003735">
    <property type="term" value="F:structural constituent of ribosome"/>
    <property type="evidence" value="ECO:0007669"/>
    <property type="project" value="InterPro"/>
</dbReference>
<dbReference type="GO" id="GO:0006412">
    <property type="term" value="P:translation"/>
    <property type="evidence" value="ECO:0007669"/>
    <property type="project" value="UniProtKB-UniRule"/>
</dbReference>
<dbReference type="Gene3D" id="3.100.10.10">
    <property type="match status" value="1"/>
</dbReference>
<dbReference type="HAMAP" id="MF_00329">
    <property type="entry name" value="Ribosomal_eL18"/>
    <property type="match status" value="1"/>
</dbReference>
<dbReference type="InterPro" id="IPR000039">
    <property type="entry name" value="Ribosomal_eL18"/>
</dbReference>
<dbReference type="InterPro" id="IPR022947">
    <property type="entry name" value="Ribosomal_eL18_arc"/>
</dbReference>
<dbReference type="InterPro" id="IPR021131">
    <property type="entry name" value="Ribosomal_uL15/eL18"/>
</dbReference>
<dbReference type="InterPro" id="IPR036227">
    <property type="entry name" value="Ribosomal_uL15/eL18_sf"/>
</dbReference>
<dbReference type="InterPro" id="IPR001196">
    <property type="entry name" value="Ribosomal_uL15_CS"/>
</dbReference>
<dbReference type="NCBIfam" id="NF003079">
    <property type="entry name" value="PRK04005.1"/>
    <property type="match status" value="1"/>
</dbReference>
<dbReference type="PANTHER" id="PTHR10934">
    <property type="entry name" value="60S RIBOSOMAL PROTEIN L18"/>
    <property type="match status" value="1"/>
</dbReference>
<dbReference type="PANTHER" id="PTHR10934:SF2">
    <property type="entry name" value="LARGE RIBOSOMAL SUBUNIT PROTEIN EL18"/>
    <property type="match status" value="1"/>
</dbReference>
<dbReference type="Pfam" id="PF17135">
    <property type="entry name" value="Ribosomal_L18"/>
    <property type="match status" value="1"/>
</dbReference>
<dbReference type="SUPFAM" id="SSF52080">
    <property type="entry name" value="Ribosomal proteins L15p and L18e"/>
    <property type="match status" value="1"/>
</dbReference>
<name>RL18E_ARCFU</name>
<comment type="similarity">
    <text evidence="1">Belongs to the eukaryotic ribosomal protein eL18 family.</text>
</comment>
<comment type="caution">
    <text evidence="2">A single-base error is suspected in position 1, thus masking the true initiator Met.</text>
</comment>
<comment type="sequence caution" evidence="2">
    <conflict type="erroneous initiation">
        <sequence resource="EMBL-CDS" id="AAB90121"/>
    </conflict>
    <text>Truncated N-terminus.</text>
</comment>
<protein>
    <recommendedName>
        <fullName evidence="1">Large ribosomal subunit protein eL18</fullName>
    </recommendedName>
    <alternativeName>
        <fullName evidence="2">50S ribosomal protein L18e</fullName>
    </alternativeName>
</protein>